<feature type="chain" id="PRO_1000024770" description="Ribonuclease PH">
    <location>
        <begin position="1"/>
        <end position="238"/>
    </location>
</feature>
<feature type="binding site" evidence="1">
    <location>
        <position position="86"/>
    </location>
    <ligand>
        <name>phosphate</name>
        <dbReference type="ChEBI" id="CHEBI:43474"/>
        <note>substrate</note>
    </ligand>
</feature>
<feature type="binding site" evidence="1">
    <location>
        <begin position="124"/>
        <end position="126"/>
    </location>
    <ligand>
        <name>phosphate</name>
        <dbReference type="ChEBI" id="CHEBI:43474"/>
        <note>substrate</note>
    </ligand>
</feature>
<accession>Q0A5V1</accession>
<organism>
    <name type="scientific">Alkalilimnicola ehrlichii (strain ATCC BAA-1101 / DSM 17681 / MLHE-1)</name>
    <dbReference type="NCBI Taxonomy" id="187272"/>
    <lineage>
        <taxon>Bacteria</taxon>
        <taxon>Pseudomonadati</taxon>
        <taxon>Pseudomonadota</taxon>
        <taxon>Gammaproteobacteria</taxon>
        <taxon>Chromatiales</taxon>
        <taxon>Ectothiorhodospiraceae</taxon>
        <taxon>Alkalilimnicola</taxon>
    </lineage>
</organism>
<reference key="1">
    <citation type="submission" date="2006-08" db="EMBL/GenBank/DDBJ databases">
        <title>Complete sequence of Alkalilimnicola ehrilichei MLHE-1.</title>
        <authorList>
            <person name="Copeland A."/>
            <person name="Lucas S."/>
            <person name="Lapidus A."/>
            <person name="Barry K."/>
            <person name="Detter J.C."/>
            <person name="Glavina del Rio T."/>
            <person name="Hammon N."/>
            <person name="Israni S."/>
            <person name="Dalin E."/>
            <person name="Tice H."/>
            <person name="Pitluck S."/>
            <person name="Sims D."/>
            <person name="Brettin T."/>
            <person name="Bruce D."/>
            <person name="Han C."/>
            <person name="Tapia R."/>
            <person name="Gilna P."/>
            <person name="Schmutz J."/>
            <person name="Larimer F."/>
            <person name="Land M."/>
            <person name="Hauser L."/>
            <person name="Kyrpides N."/>
            <person name="Mikhailova N."/>
            <person name="Oremland R.S."/>
            <person name="Hoeft S.E."/>
            <person name="Switzer-Blum J."/>
            <person name="Kulp T."/>
            <person name="King G."/>
            <person name="Tabita R."/>
            <person name="Witte B."/>
            <person name="Santini J.M."/>
            <person name="Basu P."/>
            <person name="Hollibaugh J.T."/>
            <person name="Xie G."/>
            <person name="Stolz J.F."/>
            <person name="Richardson P."/>
        </authorList>
    </citation>
    <scope>NUCLEOTIDE SEQUENCE [LARGE SCALE GENOMIC DNA]</scope>
    <source>
        <strain>ATCC BAA-1101 / DSM 17681 / MLHE-1</strain>
    </source>
</reference>
<dbReference type="EC" id="2.7.7.56" evidence="1"/>
<dbReference type="EMBL" id="CP000453">
    <property type="protein sequence ID" value="ABI57786.1"/>
    <property type="molecule type" value="Genomic_DNA"/>
</dbReference>
<dbReference type="RefSeq" id="WP_011630179.1">
    <property type="nucleotide sequence ID" value="NC_008340.1"/>
</dbReference>
<dbReference type="SMR" id="Q0A5V1"/>
<dbReference type="KEGG" id="aeh:Mlg_2446"/>
<dbReference type="eggNOG" id="COG0689">
    <property type="taxonomic scope" value="Bacteria"/>
</dbReference>
<dbReference type="HOGENOM" id="CLU_050858_0_0_6"/>
<dbReference type="OrthoDB" id="9802265at2"/>
<dbReference type="Proteomes" id="UP000001962">
    <property type="component" value="Chromosome"/>
</dbReference>
<dbReference type="GO" id="GO:0000175">
    <property type="term" value="F:3'-5'-RNA exonuclease activity"/>
    <property type="evidence" value="ECO:0007669"/>
    <property type="project" value="UniProtKB-UniRule"/>
</dbReference>
<dbReference type="GO" id="GO:0000049">
    <property type="term" value="F:tRNA binding"/>
    <property type="evidence" value="ECO:0007669"/>
    <property type="project" value="UniProtKB-UniRule"/>
</dbReference>
<dbReference type="GO" id="GO:0009022">
    <property type="term" value="F:tRNA nucleotidyltransferase activity"/>
    <property type="evidence" value="ECO:0007669"/>
    <property type="project" value="UniProtKB-UniRule"/>
</dbReference>
<dbReference type="GO" id="GO:0016075">
    <property type="term" value="P:rRNA catabolic process"/>
    <property type="evidence" value="ECO:0007669"/>
    <property type="project" value="UniProtKB-UniRule"/>
</dbReference>
<dbReference type="GO" id="GO:0006364">
    <property type="term" value="P:rRNA processing"/>
    <property type="evidence" value="ECO:0007669"/>
    <property type="project" value="UniProtKB-KW"/>
</dbReference>
<dbReference type="GO" id="GO:0008033">
    <property type="term" value="P:tRNA processing"/>
    <property type="evidence" value="ECO:0007669"/>
    <property type="project" value="UniProtKB-UniRule"/>
</dbReference>
<dbReference type="CDD" id="cd11362">
    <property type="entry name" value="RNase_PH_bact"/>
    <property type="match status" value="1"/>
</dbReference>
<dbReference type="FunFam" id="3.30.230.70:FF:000003">
    <property type="entry name" value="Ribonuclease PH"/>
    <property type="match status" value="1"/>
</dbReference>
<dbReference type="Gene3D" id="3.30.230.70">
    <property type="entry name" value="GHMP Kinase, N-terminal domain"/>
    <property type="match status" value="1"/>
</dbReference>
<dbReference type="HAMAP" id="MF_00564">
    <property type="entry name" value="RNase_PH"/>
    <property type="match status" value="1"/>
</dbReference>
<dbReference type="InterPro" id="IPR001247">
    <property type="entry name" value="ExoRNase_PH_dom1"/>
</dbReference>
<dbReference type="InterPro" id="IPR015847">
    <property type="entry name" value="ExoRNase_PH_dom2"/>
</dbReference>
<dbReference type="InterPro" id="IPR036345">
    <property type="entry name" value="ExoRNase_PH_dom2_sf"/>
</dbReference>
<dbReference type="InterPro" id="IPR027408">
    <property type="entry name" value="PNPase/RNase_PH_dom_sf"/>
</dbReference>
<dbReference type="InterPro" id="IPR020568">
    <property type="entry name" value="Ribosomal_Su5_D2-typ_SF"/>
</dbReference>
<dbReference type="InterPro" id="IPR050080">
    <property type="entry name" value="RNase_PH"/>
</dbReference>
<dbReference type="InterPro" id="IPR002381">
    <property type="entry name" value="RNase_PH_bac-type"/>
</dbReference>
<dbReference type="InterPro" id="IPR018336">
    <property type="entry name" value="RNase_PH_CS"/>
</dbReference>
<dbReference type="NCBIfam" id="TIGR01966">
    <property type="entry name" value="RNasePH"/>
    <property type="match status" value="1"/>
</dbReference>
<dbReference type="PANTHER" id="PTHR11953">
    <property type="entry name" value="EXOSOME COMPLEX COMPONENT"/>
    <property type="match status" value="1"/>
</dbReference>
<dbReference type="PANTHER" id="PTHR11953:SF0">
    <property type="entry name" value="EXOSOME COMPLEX COMPONENT RRP41"/>
    <property type="match status" value="1"/>
</dbReference>
<dbReference type="Pfam" id="PF01138">
    <property type="entry name" value="RNase_PH"/>
    <property type="match status" value="1"/>
</dbReference>
<dbReference type="Pfam" id="PF03725">
    <property type="entry name" value="RNase_PH_C"/>
    <property type="match status" value="1"/>
</dbReference>
<dbReference type="SUPFAM" id="SSF55666">
    <property type="entry name" value="Ribonuclease PH domain 2-like"/>
    <property type="match status" value="1"/>
</dbReference>
<dbReference type="SUPFAM" id="SSF54211">
    <property type="entry name" value="Ribosomal protein S5 domain 2-like"/>
    <property type="match status" value="1"/>
</dbReference>
<dbReference type="PROSITE" id="PS01277">
    <property type="entry name" value="RIBONUCLEASE_PH"/>
    <property type="match status" value="1"/>
</dbReference>
<evidence type="ECO:0000255" key="1">
    <source>
        <dbReference type="HAMAP-Rule" id="MF_00564"/>
    </source>
</evidence>
<name>RNPH_ALKEH</name>
<comment type="function">
    <text evidence="1">Phosphorolytic 3'-5' exoribonuclease that plays an important role in tRNA 3'-end maturation. Removes nucleotide residues following the 3'-CCA terminus of tRNAs; can also add nucleotides to the ends of RNA molecules by using nucleoside diphosphates as substrates, but this may not be physiologically important. Probably plays a role in initiation of 16S rRNA degradation (leading to ribosome degradation) during starvation.</text>
</comment>
<comment type="catalytic activity">
    <reaction evidence="1">
        <text>tRNA(n+1) + phosphate = tRNA(n) + a ribonucleoside 5'-diphosphate</text>
        <dbReference type="Rhea" id="RHEA:10628"/>
        <dbReference type="Rhea" id="RHEA-COMP:17343"/>
        <dbReference type="Rhea" id="RHEA-COMP:17344"/>
        <dbReference type="ChEBI" id="CHEBI:43474"/>
        <dbReference type="ChEBI" id="CHEBI:57930"/>
        <dbReference type="ChEBI" id="CHEBI:173114"/>
        <dbReference type="EC" id="2.7.7.56"/>
    </reaction>
</comment>
<comment type="subunit">
    <text evidence="1">Homohexameric ring arranged as a trimer of dimers.</text>
</comment>
<comment type="similarity">
    <text evidence="1">Belongs to the RNase PH family.</text>
</comment>
<gene>
    <name evidence="1" type="primary">rph</name>
    <name type="ordered locus">Mlg_2446</name>
</gene>
<protein>
    <recommendedName>
        <fullName evidence="1">Ribonuclease PH</fullName>
        <shortName evidence="1">RNase PH</shortName>
        <ecNumber evidence="1">2.7.7.56</ecNumber>
    </recommendedName>
    <alternativeName>
        <fullName evidence="1">tRNA nucleotidyltransferase</fullName>
    </alternativeName>
</protein>
<keyword id="KW-0548">Nucleotidyltransferase</keyword>
<keyword id="KW-1185">Reference proteome</keyword>
<keyword id="KW-0694">RNA-binding</keyword>
<keyword id="KW-0698">rRNA processing</keyword>
<keyword id="KW-0808">Transferase</keyword>
<keyword id="KW-0819">tRNA processing</keyword>
<keyword id="KW-0820">tRNA-binding</keyword>
<sequence length="238" mass="26200">MRPSGRKPDELRPVRLTRHYTRHAEGSVLVEFGDTRVLCTASVEERVPPWLRNQGRGWVTAEYGMLPRSTGTRNDREAARGKQQGRTIEIQRLIGRALRAAVDLEALGERRVVLDCDVLQADGGTRTAAITGAYVALVDACNLLRKEGRIRRSPIFGQVAAVSVGIYQGTPVLDLDYAEDSEAETDMNVVMNEAGGFIELQGTAEGHAFRRDELNAMTELAELGVAQLIETQRQALEA</sequence>
<proteinExistence type="inferred from homology"/>